<proteinExistence type="inferred from homology"/>
<keyword id="KW-0001">2Fe-2S</keyword>
<keyword id="KW-0004">4Fe-4S</keyword>
<keyword id="KW-0093">Biotin biosynthesis</keyword>
<keyword id="KW-0408">Iron</keyword>
<keyword id="KW-0411">Iron-sulfur</keyword>
<keyword id="KW-0479">Metal-binding</keyword>
<keyword id="KW-0949">S-adenosyl-L-methionine</keyword>
<keyword id="KW-0808">Transferase</keyword>
<accession>A6UYW0</accession>
<organism>
    <name type="scientific">Pseudomonas paraeruginosa (strain DSM 24068 / PA7)</name>
    <name type="common">Pseudomonas aeruginosa (strain PA7)</name>
    <dbReference type="NCBI Taxonomy" id="381754"/>
    <lineage>
        <taxon>Bacteria</taxon>
        <taxon>Pseudomonadati</taxon>
        <taxon>Pseudomonadota</taxon>
        <taxon>Gammaproteobacteria</taxon>
        <taxon>Pseudomonadales</taxon>
        <taxon>Pseudomonadaceae</taxon>
        <taxon>Pseudomonas</taxon>
        <taxon>Pseudomonas paraeruginosa</taxon>
    </lineage>
</organism>
<dbReference type="EC" id="2.8.1.6" evidence="1"/>
<dbReference type="EMBL" id="CP000744">
    <property type="protein sequence ID" value="ABR84409.1"/>
    <property type="molecule type" value="Genomic_DNA"/>
</dbReference>
<dbReference type="RefSeq" id="WP_012074069.1">
    <property type="nucleotide sequence ID" value="NC_009656.1"/>
</dbReference>
<dbReference type="SMR" id="A6UYW0"/>
<dbReference type="KEGG" id="pap:PSPA7_0600"/>
<dbReference type="HOGENOM" id="CLU_033172_1_2_6"/>
<dbReference type="UniPathway" id="UPA00078">
    <property type="reaction ID" value="UER00162"/>
</dbReference>
<dbReference type="Proteomes" id="UP000001582">
    <property type="component" value="Chromosome"/>
</dbReference>
<dbReference type="GO" id="GO:0051537">
    <property type="term" value="F:2 iron, 2 sulfur cluster binding"/>
    <property type="evidence" value="ECO:0007669"/>
    <property type="project" value="UniProtKB-KW"/>
</dbReference>
<dbReference type="GO" id="GO:0051539">
    <property type="term" value="F:4 iron, 4 sulfur cluster binding"/>
    <property type="evidence" value="ECO:0007669"/>
    <property type="project" value="UniProtKB-KW"/>
</dbReference>
<dbReference type="GO" id="GO:0004076">
    <property type="term" value="F:biotin synthase activity"/>
    <property type="evidence" value="ECO:0007669"/>
    <property type="project" value="UniProtKB-UniRule"/>
</dbReference>
<dbReference type="GO" id="GO:0005506">
    <property type="term" value="F:iron ion binding"/>
    <property type="evidence" value="ECO:0007669"/>
    <property type="project" value="UniProtKB-UniRule"/>
</dbReference>
<dbReference type="GO" id="GO:0009102">
    <property type="term" value="P:biotin biosynthetic process"/>
    <property type="evidence" value="ECO:0007669"/>
    <property type="project" value="UniProtKB-UniRule"/>
</dbReference>
<dbReference type="CDD" id="cd01335">
    <property type="entry name" value="Radical_SAM"/>
    <property type="match status" value="1"/>
</dbReference>
<dbReference type="FunFam" id="3.20.20.70:FF:000011">
    <property type="entry name" value="Biotin synthase"/>
    <property type="match status" value="1"/>
</dbReference>
<dbReference type="Gene3D" id="3.20.20.70">
    <property type="entry name" value="Aldolase class I"/>
    <property type="match status" value="1"/>
</dbReference>
<dbReference type="HAMAP" id="MF_01694">
    <property type="entry name" value="BioB"/>
    <property type="match status" value="1"/>
</dbReference>
<dbReference type="InterPro" id="IPR013785">
    <property type="entry name" value="Aldolase_TIM"/>
</dbReference>
<dbReference type="InterPro" id="IPR010722">
    <property type="entry name" value="BATS_dom"/>
</dbReference>
<dbReference type="InterPro" id="IPR002684">
    <property type="entry name" value="Biotin_synth/BioAB"/>
</dbReference>
<dbReference type="InterPro" id="IPR024177">
    <property type="entry name" value="Biotin_synthase"/>
</dbReference>
<dbReference type="InterPro" id="IPR006638">
    <property type="entry name" value="Elp3/MiaA/NifB-like_rSAM"/>
</dbReference>
<dbReference type="InterPro" id="IPR007197">
    <property type="entry name" value="rSAM"/>
</dbReference>
<dbReference type="NCBIfam" id="TIGR00433">
    <property type="entry name" value="bioB"/>
    <property type="match status" value="1"/>
</dbReference>
<dbReference type="PANTHER" id="PTHR22976">
    <property type="entry name" value="BIOTIN SYNTHASE"/>
    <property type="match status" value="1"/>
</dbReference>
<dbReference type="PANTHER" id="PTHR22976:SF2">
    <property type="entry name" value="BIOTIN SYNTHASE, MITOCHONDRIAL"/>
    <property type="match status" value="1"/>
</dbReference>
<dbReference type="Pfam" id="PF06968">
    <property type="entry name" value="BATS"/>
    <property type="match status" value="1"/>
</dbReference>
<dbReference type="Pfam" id="PF04055">
    <property type="entry name" value="Radical_SAM"/>
    <property type="match status" value="1"/>
</dbReference>
<dbReference type="PIRSF" id="PIRSF001619">
    <property type="entry name" value="Biotin_synth"/>
    <property type="match status" value="1"/>
</dbReference>
<dbReference type="SFLD" id="SFLDF00272">
    <property type="entry name" value="biotin_synthase"/>
    <property type="match status" value="1"/>
</dbReference>
<dbReference type="SFLD" id="SFLDG01278">
    <property type="entry name" value="biotin_synthase_like"/>
    <property type="match status" value="1"/>
</dbReference>
<dbReference type="SMART" id="SM00876">
    <property type="entry name" value="BATS"/>
    <property type="match status" value="1"/>
</dbReference>
<dbReference type="SMART" id="SM00729">
    <property type="entry name" value="Elp3"/>
    <property type="match status" value="1"/>
</dbReference>
<dbReference type="SUPFAM" id="SSF102114">
    <property type="entry name" value="Radical SAM enzymes"/>
    <property type="match status" value="1"/>
</dbReference>
<dbReference type="PROSITE" id="PS51918">
    <property type="entry name" value="RADICAL_SAM"/>
    <property type="match status" value="1"/>
</dbReference>
<protein>
    <recommendedName>
        <fullName evidence="1">Biotin synthase</fullName>
        <ecNumber evidence="1">2.8.1.6</ecNumber>
    </recommendedName>
</protein>
<reference key="1">
    <citation type="submission" date="2007-06" db="EMBL/GenBank/DDBJ databases">
        <authorList>
            <person name="Dodson R.J."/>
            <person name="Harkins D."/>
            <person name="Paulsen I.T."/>
        </authorList>
    </citation>
    <scope>NUCLEOTIDE SEQUENCE [LARGE SCALE GENOMIC DNA]</scope>
    <source>
        <strain>DSM 24068 / PA7</strain>
    </source>
</reference>
<evidence type="ECO:0000255" key="1">
    <source>
        <dbReference type="HAMAP-Rule" id="MF_01694"/>
    </source>
</evidence>
<evidence type="ECO:0000255" key="2">
    <source>
        <dbReference type="PROSITE-ProRule" id="PRU01266"/>
    </source>
</evidence>
<gene>
    <name evidence="1" type="primary">bioB</name>
    <name type="ordered locus">PSPA7_0600</name>
</gene>
<feature type="chain" id="PRO_0000381552" description="Biotin synthase">
    <location>
        <begin position="1"/>
        <end position="352"/>
    </location>
</feature>
<feature type="domain" description="Radical SAM core" evidence="2">
    <location>
        <begin position="44"/>
        <end position="262"/>
    </location>
</feature>
<feature type="binding site" evidence="1">
    <location>
        <position position="59"/>
    </location>
    <ligand>
        <name>[4Fe-4S] cluster</name>
        <dbReference type="ChEBI" id="CHEBI:49883"/>
        <note>4Fe-4S-S-AdoMet</note>
    </ligand>
</feature>
<feature type="binding site" evidence="1">
    <location>
        <position position="63"/>
    </location>
    <ligand>
        <name>[4Fe-4S] cluster</name>
        <dbReference type="ChEBI" id="CHEBI:49883"/>
        <note>4Fe-4S-S-AdoMet</note>
    </ligand>
</feature>
<feature type="binding site" evidence="1">
    <location>
        <position position="66"/>
    </location>
    <ligand>
        <name>[4Fe-4S] cluster</name>
        <dbReference type="ChEBI" id="CHEBI:49883"/>
        <note>4Fe-4S-S-AdoMet</note>
    </ligand>
</feature>
<feature type="binding site" evidence="1">
    <location>
        <position position="103"/>
    </location>
    <ligand>
        <name>[2Fe-2S] cluster</name>
        <dbReference type="ChEBI" id="CHEBI:190135"/>
    </ligand>
</feature>
<feature type="binding site" evidence="1">
    <location>
        <position position="134"/>
    </location>
    <ligand>
        <name>[2Fe-2S] cluster</name>
        <dbReference type="ChEBI" id="CHEBI:190135"/>
    </ligand>
</feature>
<feature type="binding site" evidence="1">
    <location>
        <position position="194"/>
    </location>
    <ligand>
        <name>[2Fe-2S] cluster</name>
        <dbReference type="ChEBI" id="CHEBI:190135"/>
    </ligand>
</feature>
<feature type="binding site" evidence="1">
    <location>
        <position position="266"/>
    </location>
    <ligand>
        <name>[2Fe-2S] cluster</name>
        <dbReference type="ChEBI" id="CHEBI:190135"/>
    </ligand>
</feature>
<name>BIOB_PSEP7</name>
<comment type="function">
    <text evidence="1">Catalyzes the conversion of dethiobiotin (DTB) to biotin by the insertion of a sulfur atom into dethiobiotin via a radical-based mechanism.</text>
</comment>
<comment type="catalytic activity">
    <reaction evidence="1">
        <text>(4R,5S)-dethiobiotin + (sulfur carrier)-SH + 2 reduced [2Fe-2S]-[ferredoxin] + 2 S-adenosyl-L-methionine = (sulfur carrier)-H + biotin + 2 5'-deoxyadenosine + 2 L-methionine + 2 oxidized [2Fe-2S]-[ferredoxin]</text>
        <dbReference type="Rhea" id="RHEA:22060"/>
        <dbReference type="Rhea" id="RHEA-COMP:10000"/>
        <dbReference type="Rhea" id="RHEA-COMP:10001"/>
        <dbReference type="Rhea" id="RHEA-COMP:14737"/>
        <dbReference type="Rhea" id="RHEA-COMP:14739"/>
        <dbReference type="ChEBI" id="CHEBI:17319"/>
        <dbReference type="ChEBI" id="CHEBI:29917"/>
        <dbReference type="ChEBI" id="CHEBI:33737"/>
        <dbReference type="ChEBI" id="CHEBI:33738"/>
        <dbReference type="ChEBI" id="CHEBI:57586"/>
        <dbReference type="ChEBI" id="CHEBI:57844"/>
        <dbReference type="ChEBI" id="CHEBI:59789"/>
        <dbReference type="ChEBI" id="CHEBI:64428"/>
        <dbReference type="ChEBI" id="CHEBI:149473"/>
        <dbReference type="EC" id="2.8.1.6"/>
    </reaction>
</comment>
<comment type="cofactor">
    <cofactor evidence="1">
        <name>[4Fe-4S] cluster</name>
        <dbReference type="ChEBI" id="CHEBI:49883"/>
    </cofactor>
    <text evidence="1">Binds 1 [4Fe-4S] cluster. The cluster is coordinated with 3 cysteines and an exchangeable S-adenosyl-L-methionine.</text>
</comment>
<comment type="cofactor">
    <cofactor evidence="1">
        <name>[2Fe-2S] cluster</name>
        <dbReference type="ChEBI" id="CHEBI:190135"/>
    </cofactor>
    <text evidence="1">Binds 1 [2Fe-2S] cluster. The cluster is coordinated with 3 cysteines and 1 arginine.</text>
</comment>
<comment type="pathway">
    <text evidence="1">Cofactor biosynthesis; biotin biosynthesis; biotin from 7,8-diaminononanoate: step 2/2.</text>
</comment>
<comment type="subunit">
    <text evidence="1">Homodimer.</text>
</comment>
<comment type="similarity">
    <text evidence="1">Belongs to the radical SAM superfamily. Biotin synthase family.</text>
</comment>
<sequence length="352" mass="39094">MSASAAVATRHDWSLAEVRALFEQPFNDLLFQAQTVHRAYFDPNRVQVSTLLSIKTGACPEDCKYCPQSGHYNTGLDKEKLMEVQKVLEAAAEAKAIGSTRFCMGAAWKHPSAKDMPYVLEMVKGVKRLGLETCMTLGRLTQEQTQALADAGLDYYNHNLDTSPEFYGNIITTRTYGERLQTLAYVREAGMKICSGGILGMGESVDDRAGLLIQLANLPEHPESVPINMLVKVKGTPLAEEKDVDPFDFIRTLAVARIMMPKSHVRLSAGREQMNEQMQALAFMAGANSIFYGEKLLTTKNPQAEKDMQLFARLGIKPEEREEHADEVHQAAIEQALVEQRDSQLFYNAASA</sequence>